<feature type="chain" id="PRO_1000134523" description="Acetyl-coenzyme A carboxylase carboxyl transferase subunit alpha">
    <location>
        <begin position="1"/>
        <end position="317"/>
    </location>
</feature>
<feature type="domain" description="CoA carboxyltransferase C-terminal" evidence="2">
    <location>
        <begin position="31"/>
        <end position="292"/>
    </location>
</feature>
<protein>
    <recommendedName>
        <fullName evidence="1">Acetyl-coenzyme A carboxylase carboxyl transferase subunit alpha</fullName>
        <shortName evidence="1">ACCase subunit alpha</shortName>
        <shortName evidence="1">Acetyl-CoA carboxylase carboxyltransferase subunit alpha</shortName>
        <ecNumber evidence="1">2.1.3.15</ecNumber>
    </recommendedName>
</protein>
<comment type="function">
    <text evidence="1">Component of the acetyl coenzyme A carboxylase (ACC) complex. First, biotin carboxylase catalyzes the carboxylation of biotin on its carrier protein (BCCP) and then the CO(2) group is transferred by the carboxyltransferase to acetyl-CoA to form malonyl-CoA.</text>
</comment>
<comment type="catalytic activity">
    <reaction evidence="1">
        <text>N(6)-carboxybiotinyl-L-lysyl-[protein] + acetyl-CoA = N(6)-biotinyl-L-lysyl-[protein] + malonyl-CoA</text>
        <dbReference type="Rhea" id="RHEA:54728"/>
        <dbReference type="Rhea" id="RHEA-COMP:10505"/>
        <dbReference type="Rhea" id="RHEA-COMP:10506"/>
        <dbReference type="ChEBI" id="CHEBI:57288"/>
        <dbReference type="ChEBI" id="CHEBI:57384"/>
        <dbReference type="ChEBI" id="CHEBI:83144"/>
        <dbReference type="ChEBI" id="CHEBI:83145"/>
        <dbReference type="EC" id="2.1.3.15"/>
    </reaction>
</comment>
<comment type="pathway">
    <text evidence="1">Lipid metabolism; malonyl-CoA biosynthesis; malonyl-CoA from acetyl-CoA: step 1/1.</text>
</comment>
<comment type="subunit">
    <text evidence="1">Acetyl-CoA carboxylase is a heterohexamer composed of biotin carboxyl carrier protein (AccB), biotin carboxylase (AccC) and two subunits each of ACCase subunit alpha (AccA) and ACCase subunit beta (AccD).</text>
</comment>
<comment type="subcellular location">
    <subcellularLocation>
        <location evidence="1">Cytoplasm</location>
    </subcellularLocation>
</comment>
<comment type="similarity">
    <text evidence="1">Belongs to the AccA family.</text>
</comment>
<reference key="1">
    <citation type="journal article" date="2007" name="Nat. Biotechnol.">
        <title>Complete genome sequence of the myxobacterium Sorangium cellulosum.</title>
        <authorList>
            <person name="Schneiker S."/>
            <person name="Perlova O."/>
            <person name="Kaiser O."/>
            <person name="Gerth K."/>
            <person name="Alici A."/>
            <person name="Altmeyer M.O."/>
            <person name="Bartels D."/>
            <person name="Bekel T."/>
            <person name="Beyer S."/>
            <person name="Bode E."/>
            <person name="Bode H.B."/>
            <person name="Bolten C.J."/>
            <person name="Choudhuri J.V."/>
            <person name="Doss S."/>
            <person name="Elnakady Y.A."/>
            <person name="Frank B."/>
            <person name="Gaigalat L."/>
            <person name="Goesmann A."/>
            <person name="Groeger C."/>
            <person name="Gross F."/>
            <person name="Jelsbak L."/>
            <person name="Jelsbak L."/>
            <person name="Kalinowski J."/>
            <person name="Kegler C."/>
            <person name="Knauber T."/>
            <person name="Konietzny S."/>
            <person name="Kopp M."/>
            <person name="Krause L."/>
            <person name="Krug D."/>
            <person name="Linke B."/>
            <person name="Mahmud T."/>
            <person name="Martinez-Arias R."/>
            <person name="McHardy A.C."/>
            <person name="Merai M."/>
            <person name="Meyer F."/>
            <person name="Mormann S."/>
            <person name="Munoz-Dorado J."/>
            <person name="Perez J."/>
            <person name="Pradella S."/>
            <person name="Rachid S."/>
            <person name="Raddatz G."/>
            <person name="Rosenau F."/>
            <person name="Rueckert C."/>
            <person name="Sasse F."/>
            <person name="Scharfe M."/>
            <person name="Schuster S.C."/>
            <person name="Suen G."/>
            <person name="Treuner-Lange A."/>
            <person name="Velicer G.J."/>
            <person name="Vorholter F.-J."/>
            <person name="Weissman K.J."/>
            <person name="Welch R.D."/>
            <person name="Wenzel S.C."/>
            <person name="Whitworth D.E."/>
            <person name="Wilhelm S."/>
            <person name="Wittmann C."/>
            <person name="Bloecker H."/>
            <person name="Puehler A."/>
            <person name="Mueller R."/>
        </authorList>
    </citation>
    <scope>NUCLEOTIDE SEQUENCE [LARGE SCALE GENOMIC DNA]</scope>
    <source>
        <strain>So ce56</strain>
    </source>
</reference>
<accession>A9F596</accession>
<evidence type="ECO:0000255" key="1">
    <source>
        <dbReference type="HAMAP-Rule" id="MF_00823"/>
    </source>
</evidence>
<evidence type="ECO:0000255" key="2">
    <source>
        <dbReference type="PROSITE-ProRule" id="PRU01137"/>
    </source>
</evidence>
<dbReference type="EC" id="2.1.3.15" evidence="1"/>
<dbReference type="EMBL" id="AM746676">
    <property type="protein sequence ID" value="CAN97784.1"/>
    <property type="molecule type" value="Genomic_DNA"/>
</dbReference>
<dbReference type="RefSeq" id="WP_012240223.1">
    <property type="nucleotide sequence ID" value="NC_010162.1"/>
</dbReference>
<dbReference type="SMR" id="A9F596"/>
<dbReference type="STRING" id="448385.sce7615"/>
<dbReference type="KEGG" id="scl:sce7615"/>
<dbReference type="eggNOG" id="COG0825">
    <property type="taxonomic scope" value="Bacteria"/>
</dbReference>
<dbReference type="HOGENOM" id="CLU_015486_0_2_7"/>
<dbReference type="OrthoDB" id="9808023at2"/>
<dbReference type="BioCyc" id="SCEL448385:SCE_RS39015-MONOMER"/>
<dbReference type="UniPathway" id="UPA00655">
    <property type="reaction ID" value="UER00711"/>
</dbReference>
<dbReference type="Proteomes" id="UP000002139">
    <property type="component" value="Chromosome"/>
</dbReference>
<dbReference type="GO" id="GO:0009317">
    <property type="term" value="C:acetyl-CoA carboxylase complex"/>
    <property type="evidence" value="ECO:0007669"/>
    <property type="project" value="InterPro"/>
</dbReference>
<dbReference type="GO" id="GO:0003989">
    <property type="term" value="F:acetyl-CoA carboxylase activity"/>
    <property type="evidence" value="ECO:0007669"/>
    <property type="project" value="InterPro"/>
</dbReference>
<dbReference type="GO" id="GO:0005524">
    <property type="term" value="F:ATP binding"/>
    <property type="evidence" value="ECO:0007669"/>
    <property type="project" value="UniProtKB-KW"/>
</dbReference>
<dbReference type="GO" id="GO:0016743">
    <property type="term" value="F:carboxyl- or carbamoyltransferase activity"/>
    <property type="evidence" value="ECO:0007669"/>
    <property type="project" value="UniProtKB-UniRule"/>
</dbReference>
<dbReference type="GO" id="GO:0006633">
    <property type="term" value="P:fatty acid biosynthetic process"/>
    <property type="evidence" value="ECO:0007669"/>
    <property type="project" value="UniProtKB-KW"/>
</dbReference>
<dbReference type="GO" id="GO:2001295">
    <property type="term" value="P:malonyl-CoA biosynthetic process"/>
    <property type="evidence" value="ECO:0007669"/>
    <property type="project" value="UniProtKB-UniRule"/>
</dbReference>
<dbReference type="Gene3D" id="3.90.226.10">
    <property type="entry name" value="2-enoyl-CoA Hydratase, Chain A, domain 1"/>
    <property type="match status" value="1"/>
</dbReference>
<dbReference type="HAMAP" id="MF_00823">
    <property type="entry name" value="AcetylCoA_CT_alpha"/>
    <property type="match status" value="1"/>
</dbReference>
<dbReference type="InterPro" id="IPR001095">
    <property type="entry name" value="Acetyl_CoA_COase_a_su"/>
</dbReference>
<dbReference type="InterPro" id="IPR029045">
    <property type="entry name" value="ClpP/crotonase-like_dom_sf"/>
</dbReference>
<dbReference type="InterPro" id="IPR011763">
    <property type="entry name" value="COA_CT_C"/>
</dbReference>
<dbReference type="NCBIfam" id="TIGR00513">
    <property type="entry name" value="accA"/>
    <property type="match status" value="1"/>
</dbReference>
<dbReference type="NCBIfam" id="NF041504">
    <property type="entry name" value="AccA_sub"/>
    <property type="match status" value="1"/>
</dbReference>
<dbReference type="NCBIfam" id="NF004344">
    <property type="entry name" value="PRK05724.1"/>
    <property type="match status" value="1"/>
</dbReference>
<dbReference type="PANTHER" id="PTHR42853">
    <property type="entry name" value="ACETYL-COENZYME A CARBOXYLASE CARBOXYL TRANSFERASE SUBUNIT ALPHA"/>
    <property type="match status" value="1"/>
</dbReference>
<dbReference type="PANTHER" id="PTHR42853:SF3">
    <property type="entry name" value="ACETYL-COENZYME A CARBOXYLASE CARBOXYL TRANSFERASE SUBUNIT ALPHA, CHLOROPLASTIC"/>
    <property type="match status" value="1"/>
</dbReference>
<dbReference type="Pfam" id="PF03255">
    <property type="entry name" value="ACCA"/>
    <property type="match status" value="1"/>
</dbReference>
<dbReference type="PRINTS" id="PR01069">
    <property type="entry name" value="ACCCTRFRASEA"/>
</dbReference>
<dbReference type="SUPFAM" id="SSF52096">
    <property type="entry name" value="ClpP/crotonase"/>
    <property type="match status" value="1"/>
</dbReference>
<dbReference type="PROSITE" id="PS50989">
    <property type="entry name" value="COA_CT_CTER"/>
    <property type="match status" value="1"/>
</dbReference>
<name>ACCA_SORC5</name>
<keyword id="KW-0067">ATP-binding</keyword>
<keyword id="KW-0963">Cytoplasm</keyword>
<keyword id="KW-0275">Fatty acid biosynthesis</keyword>
<keyword id="KW-0276">Fatty acid metabolism</keyword>
<keyword id="KW-0444">Lipid biosynthesis</keyword>
<keyword id="KW-0443">Lipid metabolism</keyword>
<keyword id="KW-0547">Nucleotide-binding</keyword>
<keyword id="KW-1185">Reference proteome</keyword>
<keyword id="KW-0808">Transferase</keyword>
<sequence>MAASILPFEKPVAELIEKVRELRALAAADPRFEPELAQLEDNTGRLAREIFAGLTPMQKVLLSRHANRPYTLDYIKRLFTDWVELKGDRRFADDCSIVGGLATYHGRSVVVVGHQKGRGAKENVKRNFGMPHPEGYRKAIRLYEMADRFGLPILTFIDTMGAYPGIGAEERGQSEAIGAALAAMARVGVPIVATVIGEGGSGGALALGVANRVLVLEFSCYSVISPEGCAAILWKDGSRADEAAARLKITAPDLLQLGVVDTIVEEPTGGAHQDHDDAAARLDKALWATLTSMDGLGPEELVDDRYRRFRGLGSFVG</sequence>
<proteinExistence type="inferred from homology"/>
<organism>
    <name type="scientific">Sorangium cellulosum (strain So ce56)</name>
    <name type="common">Polyangium cellulosum (strain So ce56)</name>
    <dbReference type="NCBI Taxonomy" id="448385"/>
    <lineage>
        <taxon>Bacteria</taxon>
        <taxon>Pseudomonadati</taxon>
        <taxon>Myxococcota</taxon>
        <taxon>Polyangia</taxon>
        <taxon>Polyangiales</taxon>
        <taxon>Polyangiaceae</taxon>
        <taxon>Sorangium</taxon>
    </lineage>
</organism>
<gene>
    <name evidence="1" type="primary">accA</name>
    <name type="ordered locus">sce7615</name>
</gene>